<sequence>MIFYKQRNAHLKPNETINYKDIDLLRKFITDQSKIVSRRSNGLTVKQQKQLAKSIKKARILALLPFVNKD</sequence>
<proteinExistence type="inferred from homology"/>
<accession>Q6B8S1</accession>
<name>RR18_GRATL</name>
<protein>
    <recommendedName>
        <fullName evidence="1">Small ribosomal subunit protein bS18c</fullName>
    </recommendedName>
    <alternativeName>
        <fullName evidence="2">30S ribosomal protein S18, chloroplastic</fullName>
    </alternativeName>
</protein>
<comment type="subunit">
    <text>Part of the 30S ribosomal subunit.</text>
</comment>
<comment type="subcellular location">
    <subcellularLocation>
        <location>Plastid</location>
        <location>Chloroplast</location>
    </subcellularLocation>
</comment>
<comment type="similarity">
    <text evidence="1">Belongs to the bacterial ribosomal protein bS18 family.</text>
</comment>
<dbReference type="EMBL" id="AY673996">
    <property type="protein sequence ID" value="AAT79714.1"/>
    <property type="molecule type" value="Genomic_DNA"/>
</dbReference>
<dbReference type="RefSeq" id="YP_063639.1">
    <property type="nucleotide sequence ID" value="NC_006137.1"/>
</dbReference>
<dbReference type="SMR" id="Q6B8S1"/>
<dbReference type="GeneID" id="2943950"/>
<dbReference type="GO" id="GO:0009507">
    <property type="term" value="C:chloroplast"/>
    <property type="evidence" value="ECO:0007669"/>
    <property type="project" value="UniProtKB-SubCell"/>
</dbReference>
<dbReference type="GO" id="GO:1990904">
    <property type="term" value="C:ribonucleoprotein complex"/>
    <property type="evidence" value="ECO:0007669"/>
    <property type="project" value="UniProtKB-KW"/>
</dbReference>
<dbReference type="GO" id="GO:0005840">
    <property type="term" value="C:ribosome"/>
    <property type="evidence" value="ECO:0007669"/>
    <property type="project" value="UniProtKB-KW"/>
</dbReference>
<dbReference type="GO" id="GO:0070181">
    <property type="term" value="F:small ribosomal subunit rRNA binding"/>
    <property type="evidence" value="ECO:0007669"/>
    <property type="project" value="TreeGrafter"/>
</dbReference>
<dbReference type="GO" id="GO:0003735">
    <property type="term" value="F:structural constituent of ribosome"/>
    <property type="evidence" value="ECO:0007669"/>
    <property type="project" value="InterPro"/>
</dbReference>
<dbReference type="GO" id="GO:0006412">
    <property type="term" value="P:translation"/>
    <property type="evidence" value="ECO:0007669"/>
    <property type="project" value="UniProtKB-UniRule"/>
</dbReference>
<dbReference type="Gene3D" id="4.10.640.10">
    <property type="entry name" value="Ribosomal protein S18"/>
    <property type="match status" value="1"/>
</dbReference>
<dbReference type="HAMAP" id="MF_00270">
    <property type="entry name" value="Ribosomal_bS18"/>
    <property type="match status" value="1"/>
</dbReference>
<dbReference type="InterPro" id="IPR001648">
    <property type="entry name" value="Ribosomal_bS18"/>
</dbReference>
<dbReference type="InterPro" id="IPR036870">
    <property type="entry name" value="Ribosomal_bS18_sf"/>
</dbReference>
<dbReference type="NCBIfam" id="TIGR00165">
    <property type="entry name" value="S18"/>
    <property type="match status" value="1"/>
</dbReference>
<dbReference type="PANTHER" id="PTHR13479">
    <property type="entry name" value="30S RIBOSOMAL PROTEIN S18"/>
    <property type="match status" value="1"/>
</dbReference>
<dbReference type="PANTHER" id="PTHR13479:SF40">
    <property type="entry name" value="SMALL RIBOSOMAL SUBUNIT PROTEIN BS18M"/>
    <property type="match status" value="1"/>
</dbReference>
<dbReference type="Pfam" id="PF01084">
    <property type="entry name" value="Ribosomal_S18"/>
    <property type="match status" value="1"/>
</dbReference>
<dbReference type="PRINTS" id="PR00974">
    <property type="entry name" value="RIBOSOMALS18"/>
</dbReference>
<dbReference type="SUPFAM" id="SSF46911">
    <property type="entry name" value="Ribosomal protein S18"/>
    <property type="match status" value="1"/>
</dbReference>
<keyword id="KW-0150">Chloroplast</keyword>
<keyword id="KW-0934">Plastid</keyword>
<keyword id="KW-0687">Ribonucleoprotein</keyword>
<keyword id="KW-0689">Ribosomal protein</keyword>
<keyword id="KW-0694">RNA-binding</keyword>
<keyword id="KW-0699">rRNA-binding</keyword>
<reference key="1">
    <citation type="journal article" date="2004" name="J. Mol. Evol.">
        <title>Comparative analysis of the complete plastid genome sequence of the red alga Gracilaria tenuistipitata var. liui provides insights into the evolution of rhodoplasts and their relationship to other plastids.</title>
        <authorList>
            <person name="Hagopian J.C."/>
            <person name="Reis M."/>
            <person name="Kitajima J.P."/>
            <person name="Bhattacharya D."/>
            <person name="de Oliveira M.C."/>
        </authorList>
    </citation>
    <scope>NUCLEOTIDE SEQUENCE [LARGE SCALE GENOMIC DNA]</scope>
</reference>
<organism>
    <name type="scientific">Gracilaria tenuistipitata var. liui</name>
    <name type="common">Red alga</name>
    <dbReference type="NCBI Taxonomy" id="285951"/>
    <lineage>
        <taxon>Eukaryota</taxon>
        <taxon>Rhodophyta</taxon>
        <taxon>Florideophyceae</taxon>
        <taxon>Rhodymeniophycidae</taxon>
        <taxon>Gracilariales</taxon>
        <taxon>Gracilariaceae</taxon>
        <taxon>Gracilaria</taxon>
        <taxon>Gracilaria tenuistipitata</taxon>
    </lineage>
</organism>
<geneLocation type="chloroplast"/>
<feature type="chain" id="PRO_0000111285" description="Small ribosomal subunit protein bS18c">
    <location>
        <begin position="1"/>
        <end position="70"/>
    </location>
</feature>
<evidence type="ECO:0000255" key="1">
    <source>
        <dbReference type="HAMAP-Rule" id="MF_00270"/>
    </source>
</evidence>
<evidence type="ECO:0000305" key="2"/>
<gene>
    <name evidence="1" type="primary">rps18</name>
    <name type="ordered locus">Grc000133</name>
</gene>